<feature type="chain" id="PRO_1000089631" description="Holliday junction branch migration complex subunit RuvB">
    <location>
        <begin position="1"/>
        <end position="344"/>
    </location>
</feature>
<feature type="region of interest" description="Large ATPase domain (RuvB-L)" evidence="1">
    <location>
        <begin position="1"/>
        <end position="181"/>
    </location>
</feature>
<feature type="region of interest" description="Small ATPAse domain (RuvB-S)" evidence="1">
    <location>
        <begin position="182"/>
        <end position="252"/>
    </location>
</feature>
<feature type="region of interest" description="Head domain (RuvB-H)" evidence="1">
    <location>
        <begin position="255"/>
        <end position="344"/>
    </location>
</feature>
<feature type="binding site" evidence="1">
    <location>
        <position position="20"/>
    </location>
    <ligand>
        <name>ATP</name>
        <dbReference type="ChEBI" id="CHEBI:30616"/>
    </ligand>
</feature>
<feature type="binding site" evidence="1">
    <location>
        <position position="21"/>
    </location>
    <ligand>
        <name>ATP</name>
        <dbReference type="ChEBI" id="CHEBI:30616"/>
    </ligand>
</feature>
<feature type="binding site" evidence="1">
    <location>
        <position position="62"/>
    </location>
    <ligand>
        <name>ATP</name>
        <dbReference type="ChEBI" id="CHEBI:30616"/>
    </ligand>
</feature>
<feature type="binding site" evidence="1">
    <location>
        <position position="65"/>
    </location>
    <ligand>
        <name>ATP</name>
        <dbReference type="ChEBI" id="CHEBI:30616"/>
    </ligand>
</feature>
<feature type="binding site" evidence="1">
    <location>
        <position position="66"/>
    </location>
    <ligand>
        <name>ATP</name>
        <dbReference type="ChEBI" id="CHEBI:30616"/>
    </ligand>
</feature>
<feature type="binding site" evidence="1">
    <location>
        <position position="66"/>
    </location>
    <ligand>
        <name>Mg(2+)</name>
        <dbReference type="ChEBI" id="CHEBI:18420"/>
    </ligand>
</feature>
<feature type="binding site" evidence="1">
    <location>
        <position position="67"/>
    </location>
    <ligand>
        <name>ATP</name>
        <dbReference type="ChEBI" id="CHEBI:30616"/>
    </ligand>
</feature>
<feature type="binding site" evidence="1">
    <location>
        <begin position="128"/>
        <end position="130"/>
    </location>
    <ligand>
        <name>ATP</name>
        <dbReference type="ChEBI" id="CHEBI:30616"/>
    </ligand>
</feature>
<feature type="binding site" evidence="1">
    <location>
        <position position="171"/>
    </location>
    <ligand>
        <name>ATP</name>
        <dbReference type="ChEBI" id="CHEBI:30616"/>
    </ligand>
</feature>
<feature type="binding site" evidence="1">
    <location>
        <position position="181"/>
    </location>
    <ligand>
        <name>ATP</name>
        <dbReference type="ChEBI" id="CHEBI:30616"/>
    </ligand>
</feature>
<feature type="binding site" evidence="1">
    <location>
        <position position="218"/>
    </location>
    <ligand>
        <name>ATP</name>
        <dbReference type="ChEBI" id="CHEBI:30616"/>
    </ligand>
</feature>
<feature type="binding site" evidence="1">
    <location>
        <position position="310"/>
    </location>
    <ligand>
        <name>DNA</name>
        <dbReference type="ChEBI" id="CHEBI:16991"/>
    </ligand>
</feature>
<feature type="binding site" evidence="1">
    <location>
        <position position="315"/>
    </location>
    <ligand>
        <name>DNA</name>
        <dbReference type="ChEBI" id="CHEBI:16991"/>
    </ligand>
</feature>
<accession>B2V338</accession>
<dbReference type="EC" id="3.6.4.-" evidence="1"/>
<dbReference type="EMBL" id="CP001078">
    <property type="protein sequence ID" value="ACD53293.1"/>
    <property type="molecule type" value="Genomic_DNA"/>
</dbReference>
<dbReference type="RefSeq" id="WP_012451229.1">
    <property type="nucleotide sequence ID" value="NC_010723.1"/>
</dbReference>
<dbReference type="SMR" id="B2V338"/>
<dbReference type="KEGG" id="cbt:CLH_0957"/>
<dbReference type="HOGENOM" id="CLU_055599_1_0_9"/>
<dbReference type="GO" id="GO:0005737">
    <property type="term" value="C:cytoplasm"/>
    <property type="evidence" value="ECO:0007669"/>
    <property type="project" value="UniProtKB-SubCell"/>
</dbReference>
<dbReference type="GO" id="GO:0048476">
    <property type="term" value="C:Holliday junction resolvase complex"/>
    <property type="evidence" value="ECO:0007669"/>
    <property type="project" value="UniProtKB-UniRule"/>
</dbReference>
<dbReference type="GO" id="GO:0005524">
    <property type="term" value="F:ATP binding"/>
    <property type="evidence" value="ECO:0007669"/>
    <property type="project" value="UniProtKB-UniRule"/>
</dbReference>
<dbReference type="GO" id="GO:0016887">
    <property type="term" value="F:ATP hydrolysis activity"/>
    <property type="evidence" value="ECO:0007669"/>
    <property type="project" value="InterPro"/>
</dbReference>
<dbReference type="GO" id="GO:0000400">
    <property type="term" value="F:four-way junction DNA binding"/>
    <property type="evidence" value="ECO:0007669"/>
    <property type="project" value="UniProtKB-UniRule"/>
</dbReference>
<dbReference type="GO" id="GO:0009378">
    <property type="term" value="F:four-way junction helicase activity"/>
    <property type="evidence" value="ECO:0007669"/>
    <property type="project" value="InterPro"/>
</dbReference>
<dbReference type="GO" id="GO:0006310">
    <property type="term" value="P:DNA recombination"/>
    <property type="evidence" value="ECO:0007669"/>
    <property type="project" value="UniProtKB-UniRule"/>
</dbReference>
<dbReference type="GO" id="GO:0006281">
    <property type="term" value="P:DNA repair"/>
    <property type="evidence" value="ECO:0007669"/>
    <property type="project" value="UniProtKB-UniRule"/>
</dbReference>
<dbReference type="CDD" id="cd00009">
    <property type="entry name" value="AAA"/>
    <property type="match status" value="1"/>
</dbReference>
<dbReference type="Gene3D" id="1.10.8.60">
    <property type="match status" value="1"/>
</dbReference>
<dbReference type="Gene3D" id="3.40.50.300">
    <property type="entry name" value="P-loop containing nucleotide triphosphate hydrolases"/>
    <property type="match status" value="1"/>
</dbReference>
<dbReference type="Gene3D" id="1.10.10.10">
    <property type="entry name" value="Winged helix-like DNA-binding domain superfamily/Winged helix DNA-binding domain"/>
    <property type="match status" value="1"/>
</dbReference>
<dbReference type="HAMAP" id="MF_00016">
    <property type="entry name" value="DNA_HJ_migration_RuvB"/>
    <property type="match status" value="1"/>
</dbReference>
<dbReference type="InterPro" id="IPR003593">
    <property type="entry name" value="AAA+_ATPase"/>
</dbReference>
<dbReference type="InterPro" id="IPR041445">
    <property type="entry name" value="AAA_lid_4"/>
</dbReference>
<dbReference type="InterPro" id="IPR004605">
    <property type="entry name" value="DNA_helicase_Holl-junc_RuvB"/>
</dbReference>
<dbReference type="InterPro" id="IPR027417">
    <property type="entry name" value="P-loop_NTPase"/>
</dbReference>
<dbReference type="InterPro" id="IPR008824">
    <property type="entry name" value="RuvB-like_N"/>
</dbReference>
<dbReference type="InterPro" id="IPR008823">
    <property type="entry name" value="RuvB_C"/>
</dbReference>
<dbReference type="InterPro" id="IPR036388">
    <property type="entry name" value="WH-like_DNA-bd_sf"/>
</dbReference>
<dbReference type="InterPro" id="IPR036390">
    <property type="entry name" value="WH_DNA-bd_sf"/>
</dbReference>
<dbReference type="NCBIfam" id="NF000868">
    <property type="entry name" value="PRK00080.1"/>
    <property type="match status" value="1"/>
</dbReference>
<dbReference type="NCBIfam" id="TIGR00635">
    <property type="entry name" value="ruvB"/>
    <property type="match status" value="1"/>
</dbReference>
<dbReference type="PANTHER" id="PTHR42848">
    <property type="match status" value="1"/>
</dbReference>
<dbReference type="PANTHER" id="PTHR42848:SF1">
    <property type="entry name" value="HOLLIDAY JUNCTION BRANCH MIGRATION COMPLEX SUBUNIT RUVB"/>
    <property type="match status" value="1"/>
</dbReference>
<dbReference type="Pfam" id="PF17864">
    <property type="entry name" value="AAA_lid_4"/>
    <property type="match status" value="1"/>
</dbReference>
<dbReference type="Pfam" id="PF05491">
    <property type="entry name" value="RuvB_C"/>
    <property type="match status" value="1"/>
</dbReference>
<dbReference type="Pfam" id="PF05496">
    <property type="entry name" value="RuvB_N"/>
    <property type="match status" value="1"/>
</dbReference>
<dbReference type="SMART" id="SM00382">
    <property type="entry name" value="AAA"/>
    <property type="match status" value="1"/>
</dbReference>
<dbReference type="SUPFAM" id="SSF52540">
    <property type="entry name" value="P-loop containing nucleoside triphosphate hydrolases"/>
    <property type="match status" value="1"/>
</dbReference>
<dbReference type="SUPFAM" id="SSF46785">
    <property type="entry name" value="Winged helix' DNA-binding domain"/>
    <property type="match status" value="1"/>
</dbReference>
<organism>
    <name type="scientific">Clostridium botulinum (strain Alaska E43 / Type E3)</name>
    <dbReference type="NCBI Taxonomy" id="508767"/>
    <lineage>
        <taxon>Bacteria</taxon>
        <taxon>Bacillati</taxon>
        <taxon>Bacillota</taxon>
        <taxon>Clostridia</taxon>
        <taxon>Eubacteriales</taxon>
        <taxon>Clostridiaceae</taxon>
        <taxon>Clostridium</taxon>
    </lineage>
</organism>
<protein>
    <recommendedName>
        <fullName evidence="1">Holliday junction branch migration complex subunit RuvB</fullName>
        <ecNumber evidence="1">3.6.4.-</ecNumber>
    </recommendedName>
</protein>
<reference key="1">
    <citation type="submission" date="2008-05" db="EMBL/GenBank/DDBJ databases">
        <title>Complete genome sequence of Clostridium botulinum E3 str. Alaska E43.</title>
        <authorList>
            <person name="Brinkac L.M."/>
            <person name="Brown J.L."/>
            <person name="Bruce D."/>
            <person name="Detter C."/>
            <person name="Munk C."/>
            <person name="Smith L.A."/>
            <person name="Smith T.J."/>
            <person name="Sutton G."/>
            <person name="Brettin T.S."/>
        </authorList>
    </citation>
    <scope>NUCLEOTIDE SEQUENCE [LARGE SCALE GENOMIC DNA]</scope>
    <source>
        <strain>Alaska E43 / Type E3</strain>
    </source>
</reference>
<evidence type="ECO:0000255" key="1">
    <source>
        <dbReference type="HAMAP-Rule" id="MF_00016"/>
    </source>
</evidence>
<name>RUVB_CLOBA</name>
<proteinExistence type="inferred from homology"/>
<keyword id="KW-0067">ATP-binding</keyword>
<keyword id="KW-0963">Cytoplasm</keyword>
<keyword id="KW-0227">DNA damage</keyword>
<keyword id="KW-0233">DNA recombination</keyword>
<keyword id="KW-0234">DNA repair</keyword>
<keyword id="KW-0238">DNA-binding</keyword>
<keyword id="KW-0378">Hydrolase</keyword>
<keyword id="KW-0547">Nucleotide-binding</keyword>
<comment type="function">
    <text evidence="1">The RuvA-RuvB-RuvC complex processes Holliday junction (HJ) DNA during genetic recombination and DNA repair, while the RuvA-RuvB complex plays an important role in the rescue of blocked DNA replication forks via replication fork reversal (RFR). RuvA specifically binds to HJ cruciform DNA, conferring on it an open structure. The RuvB hexamer acts as an ATP-dependent pump, pulling dsDNA into and through the RuvAB complex. RuvB forms 2 homohexamers on either side of HJ DNA bound by 1 or 2 RuvA tetramers; 4 subunits per hexamer contact DNA at a time. Coordinated motions by a converter formed by DNA-disengaged RuvB subunits stimulates ATP hydrolysis and nucleotide exchange. Immobilization of the converter enables RuvB to convert the ATP-contained energy into a lever motion, pulling 2 nucleotides of DNA out of the RuvA tetramer per ATP hydrolyzed, thus driving DNA branch migration. The RuvB motors rotate together with the DNA substrate, which together with the progressing nucleotide cycle form the mechanistic basis for DNA recombination by continuous HJ branch migration. Branch migration allows RuvC to scan DNA until it finds its consensus sequence, where it cleaves and resolves cruciform DNA.</text>
</comment>
<comment type="catalytic activity">
    <reaction evidence="1">
        <text>ATP + H2O = ADP + phosphate + H(+)</text>
        <dbReference type="Rhea" id="RHEA:13065"/>
        <dbReference type="ChEBI" id="CHEBI:15377"/>
        <dbReference type="ChEBI" id="CHEBI:15378"/>
        <dbReference type="ChEBI" id="CHEBI:30616"/>
        <dbReference type="ChEBI" id="CHEBI:43474"/>
        <dbReference type="ChEBI" id="CHEBI:456216"/>
    </reaction>
</comment>
<comment type="subunit">
    <text evidence="1">Homohexamer. Forms an RuvA(8)-RuvB(12)-Holliday junction (HJ) complex. HJ DNA is sandwiched between 2 RuvA tetramers; dsDNA enters through RuvA and exits via RuvB. An RuvB hexamer assembles on each DNA strand where it exits the tetramer. Each RuvB hexamer is contacted by two RuvA subunits (via domain III) on 2 adjacent RuvB subunits; this complex drives branch migration. In the full resolvosome a probable DNA-RuvA(4)-RuvB(12)-RuvC(2) complex forms which resolves the HJ.</text>
</comment>
<comment type="subcellular location">
    <subcellularLocation>
        <location evidence="1">Cytoplasm</location>
    </subcellularLocation>
</comment>
<comment type="domain">
    <text evidence="1">Has 3 domains, the large (RuvB-L) and small ATPase (RuvB-S) domains and the C-terminal head (RuvB-H) domain. The head domain binds DNA, while the ATPase domains jointly bind ATP, ADP or are empty depending on the state of the subunit in the translocation cycle. During a single DNA translocation step the structure of each domain remains the same, but their relative positions change.</text>
</comment>
<comment type="similarity">
    <text evidence="1">Belongs to the RuvB family.</text>
</comment>
<sequence length="344" mass="38430">MERIVTPAEMFEDGNSELSLRPQKINEYIGQDKVKERLNIFIKAAKNRKEALDHVLLYGPPGLGKTTLANIIAKEMTGDLKITSGPAIERAGDLAAILTTLKDYDVLFIDEIHRLNRSVEEILYPAMEDYALDIVIGKGAAAKSIRLDLPKFTLIGATTRIGMLTSPLRDRFGVLCAMEYYDENQLKEIVIRSAAVFGCKITEEGALEIASRSRGTPRIANRLLKRVRDYSEVKSNTVISLKEAREALELLEVDNQGFDKVDNKILEAIIDNFNGGPVGIETLSYFIGEELGTVEDVYEPYLLQKGFIVRTPRGRIASDKAYKHLGRVNNKNNNSNKGQTSFFK</sequence>
<gene>
    <name evidence="1" type="primary">ruvB</name>
    <name type="ordered locus">CLH_0957</name>
</gene>